<reference key="1">
    <citation type="journal article" date="2003" name="Genome Res.">
        <title>Comparative genome analysis of Vibrio vulnificus, a marine pathogen.</title>
        <authorList>
            <person name="Chen C.-Y."/>
            <person name="Wu K.-M."/>
            <person name="Chang Y.-C."/>
            <person name="Chang C.-H."/>
            <person name="Tsai H.-C."/>
            <person name="Liao T.-L."/>
            <person name="Liu Y.-M."/>
            <person name="Chen H.-J."/>
            <person name="Shen A.B.-T."/>
            <person name="Li J.-C."/>
            <person name="Su T.-L."/>
            <person name="Shao C.-P."/>
            <person name="Lee C.-T."/>
            <person name="Hor L.-I."/>
            <person name="Tsai S.-F."/>
        </authorList>
    </citation>
    <scope>NUCLEOTIDE SEQUENCE [LARGE SCALE GENOMIC DNA]</scope>
    <source>
        <strain>YJ016</strain>
    </source>
</reference>
<keyword id="KW-0963">Cytoplasm</keyword>
<keyword id="KW-0520">NAD</keyword>
<keyword id="KW-0560">Oxidoreductase</keyword>
<keyword id="KW-0664">Pyridoxine biosynthesis</keyword>
<gene>
    <name evidence="1" type="primary">epd</name>
    <name type="ordered locus">VV2859</name>
</gene>
<organism>
    <name type="scientific">Vibrio vulnificus (strain YJ016)</name>
    <dbReference type="NCBI Taxonomy" id="196600"/>
    <lineage>
        <taxon>Bacteria</taxon>
        <taxon>Pseudomonadati</taxon>
        <taxon>Pseudomonadota</taxon>
        <taxon>Gammaproteobacteria</taxon>
        <taxon>Vibrionales</taxon>
        <taxon>Vibrionaceae</taxon>
        <taxon>Vibrio</taxon>
    </lineage>
</organism>
<dbReference type="EC" id="1.2.1.72" evidence="1"/>
<dbReference type="EMBL" id="BA000037">
    <property type="protein sequence ID" value="BAC95623.1"/>
    <property type="molecule type" value="Genomic_DNA"/>
</dbReference>
<dbReference type="RefSeq" id="WP_011151184.1">
    <property type="nucleotide sequence ID" value="NC_005139.1"/>
</dbReference>
<dbReference type="SMR" id="Q7MHL0"/>
<dbReference type="STRING" id="672.VV93_v1c25660"/>
<dbReference type="GeneID" id="93895795"/>
<dbReference type="KEGG" id="vvy:VV2859"/>
<dbReference type="PATRIC" id="fig|196600.6.peg.2847"/>
<dbReference type="eggNOG" id="COG0057">
    <property type="taxonomic scope" value="Bacteria"/>
</dbReference>
<dbReference type="HOGENOM" id="CLU_030140_0_0_6"/>
<dbReference type="UniPathway" id="UPA00244">
    <property type="reaction ID" value="UER00309"/>
</dbReference>
<dbReference type="Proteomes" id="UP000002675">
    <property type="component" value="Chromosome I"/>
</dbReference>
<dbReference type="GO" id="GO:0005737">
    <property type="term" value="C:cytoplasm"/>
    <property type="evidence" value="ECO:0007669"/>
    <property type="project" value="UniProtKB-SubCell"/>
</dbReference>
<dbReference type="GO" id="GO:0048001">
    <property type="term" value="F:erythrose-4-phosphate dehydrogenase activity"/>
    <property type="evidence" value="ECO:0007669"/>
    <property type="project" value="UniProtKB-UniRule"/>
</dbReference>
<dbReference type="GO" id="GO:0051287">
    <property type="term" value="F:NAD binding"/>
    <property type="evidence" value="ECO:0007669"/>
    <property type="project" value="InterPro"/>
</dbReference>
<dbReference type="GO" id="GO:0042823">
    <property type="term" value="P:pyridoxal phosphate biosynthetic process"/>
    <property type="evidence" value="ECO:0007669"/>
    <property type="project" value="UniProtKB-UniRule"/>
</dbReference>
<dbReference type="GO" id="GO:0008615">
    <property type="term" value="P:pyridoxine biosynthetic process"/>
    <property type="evidence" value="ECO:0007669"/>
    <property type="project" value="UniProtKB-UniRule"/>
</dbReference>
<dbReference type="CDD" id="cd23937">
    <property type="entry name" value="GAPDH_C_E4PDH"/>
    <property type="match status" value="1"/>
</dbReference>
<dbReference type="FunFam" id="3.30.360.10:FF:000007">
    <property type="entry name" value="D-erythrose-4-phosphate dehydrogenase"/>
    <property type="match status" value="1"/>
</dbReference>
<dbReference type="FunFam" id="3.40.50.720:FF:000001">
    <property type="entry name" value="Glyceraldehyde-3-phosphate dehydrogenase"/>
    <property type="match status" value="1"/>
</dbReference>
<dbReference type="Gene3D" id="3.30.360.10">
    <property type="entry name" value="Dihydrodipicolinate Reductase, domain 2"/>
    <property type="match status" value="1"/>
</dbReference>
<dbReference type="Gene3D" id="3.40.50.720">
    <property type="entry name" value="NAD(P)-binding Rossmann-like Domain"/>
    <property type="match status" value="1"/>
</dbReference>
<dbReference type="HAMAP" id="MF_01640">
    <property type="entry name" value="E4P_dehydrog"/>
    <property type="match status" value="1"/>
</dbReference>
<dbReference type="InterPro" id="IPR006422">
    <property type="entry name" value="E4P_DH_bac"/>
</dbReference>
<dbReference type="InterPro" id="IPR020831">
    <property type="entry name" value="GlycerAld/Erythrose_P_DH"/>
</dbReference>
<dbReference type="InterPro" id="IPR020829">
    <property type="entry name" value="GlycerAld_3-P_DH_cat"/>
</dbReference>
<dbReference type="InterPro" id="IPR020828">
    <property type="entry name" value="GlycerAld_3-P_DH_NAD(P)-bd"/>
</dbReference>
<dbReference type="InterPro" id="IPR036291">
    <property type="entry name" value="NAD(P)-bd_dom_sf"/>
</dbReference>
<dbReference type="NCBIfam" id="TIGR01532">
    <property type="entry name" value="E4PD_g-proteo"/>
    <property type="match status" value="1"/>
</dbReference>
<dbReference type="NCBIfam" id="NF010058">
    <property type="entry name" value="PRK13535.1"/>
    <property type="match status" value="1"/>
</dbReference>
<dbReference type="PANTHER" id="PTHR43148">
    <property type="entry name" value="GLYCERALDEHYDE-3-PHOSPHATE DEHYDROGENASE 2"/>
    <property type="match status" value="1"/>
</dbReference>
<dbReference type="Pfam" id="PF02800">
    <property type="entry name" value="Gp_dh_C"/>
    <property type="match status" value="1"/>
</dbReference>
<dbReference type="Pfam" id="PF00044">
    <property type="entry name" value="Gp_dh_N"/>
    <property type="match status" value="1"/>
</dbReference>
<dbReference type="PIRSF" id="PIRSF000149">
    <property type="entry name" value="GAP_DH"/>
    <property type="match status" value="1"/>
</dbReference>
<dbReference type="PRINTS" id="PR00078">
    <property type="entry name" value="G3PDHDRGNASE"/>
</dbReference>
<dbReference type="SMART" id="SM00846">
    <property type="entry name" value="Gp_dh_N"/>
    <property type="match status" value="1"/>
</dbReference>
<dbReference type="SUPFAM" id="SSF55347">
    <property type="entry name" value="Glyceraldehyde-3-phosphate dehydrogenase-like, C-terminal domain"/>
    <property type="match status" value="1"/>
</dbReference>
<dbReference type="SUPFAM" id="SSF51735">
    <property type="entry name" value="NAD(P)-binding Rossmann-fold domains"/>
    <property type="match status" value="1"/>
</dbReference>
<feature type="chain" id="PRO_0000293177" description="D-erythrose-4-phosphate dehydrogenase">
    <location>
        <begin position="1"/>
        <end position="346"/>
    </location>
</feature>
<feature type="active site" description="Nucleophile" evidence="1">
    <location>
        <position position="164"/>
    </location>
</feature>
<feature type="binding site" evidence="1">
    <location>
        <begin position="11"/>
        <end position="12"/>
    </location>
    <ligand>
        <name>NAD(+)</name>
        <dbReference type="ChEBI" id="CHEBI:57540"/>
    </ligand>
</feature>
<feature type="binding site" evidence="1">
    <location>
        <begin position="163"/>
        <end position="165"/>
    </location>
    <ligand>
        <name>substrate</name>
    </ligand>
</feature>
<feature type="binding site" evidence="1">
    <location>
        <position position="209"/>
    </location>
    <ligand>
        <name>substrate</name>
    </ligand>
</feature>
<feature type="binding site" evidence="1">
    <location>
        <begin position="222"/>
        <end position="223"/>
    </location>
    <ligand>
        <name>substrate</name>
    </ligand>
</feature>
<feature type="binding site" evidence="1">
    <location>
        <position position="245"/>
    </location>
    <ligand>
        <name>substrate</name>
    </ligand>
</feature>
<feature type="binding site" evidence="1">
    <location>
        <position position="327"/>
    </location>
    <ligand>
        <name>NAD(+)</name>
        <dbReference type="ChEBI" id="CHEBI:57540"/>
    </ligand>
</feature>
<feature type="site" description="Activates thiol group during catalysis" evidence="1">
    <location>
        <position position="191"/>
    </location>
</feature>
<comment type="function">
    <text evidence="1">Catalyzes the NAD-dependent conversion of D-erythrose 4-phosphate to 4-phosphoerythronate.</text>
</comment>
<comment type="catalytic activity">
    <reaction evidence="1">
        <text>D-erythrose 4-phosphate + NAD(+) + H2O = 4-phospho-D-erythronate + NADH + 2 H(+)</text>
        <dbReference type="Rhea" id="RHEA:12056"/>
        <dbReference type="ChEBI" id="CHEBI:15377"/>
        <dbReference type="ChEBI" id="CHEBI:15378"/>
        <dbReference type="ChEBI" id="CHEBI:16897"/>
        <dbReference type="ChEBI" id="CHEBI:57540"/>
        <dbReference type="ChEBI" id="CHEBI:57945"/>
        <dbReference type="ChEBI" id="CHEBI:58766"/>
        <dbReference type="EC" id="1.2.1.72"/>
    </reaction>
</comment>
<comment type="pathway">
    <text evidence="1">Cofactor biosynthesis; pyridoxine 5'-phosphate biosynthesis; pyridoxine 5'-phosphate from D-erythrose 4-phosphate: step 1/5.</text>
</comment>
<comment type="subunit">
    <text evidence="1">Homotetramer.</text>
</comment>
<comment type="subcellular location">
    <subcellularLocation>
        <location evidence="1">Cytoplasm</location>
    </subcellularLocation>
</comment>
<comment type="similarity">
    <text evidence="1">Belongs to the glyceraldehyde-3-phosphate dehydrogenase family. Epd subfamily.</text>
</comment>
<proteinExistence type="inferred from homology"/>
<sequence length="346" mass="38189">MLKVAINGFGRIGRNVLRAVYESGKHQQIKVVAVNELAQPEAMAHLLQYDTSHGRFGKRISHDQEHLYVHHDACPQGKGEFDSIRILHLSEINLLPWRDLEVDLVLDCTGVFGCQADGLEHIKAGAKKVLFSHPGASDLDNTIIYGVNHETLKAEHNVVSNGSCTTNCIVPIIKVLDEAFGIESGTITTIHSSMNDQQVIDAYHSDLRRTRAASQSIIPVDTKLHKGIERIFPKFSNKFEAISVRVPTVNVTAMDLSVTINTNVKVNDVNQTIVNASQCTLRGIVDYTEAPLVSIDFNHDPHSAIVDGSQTRVSNGHLVKMLVWCDNEWGFANRMLDTALAMQAAK</sequence>
<protein>
    <recommendedName>
        <fullName evidence="1">D-erythrose-4-phosphate dehydrogenase</fullName>
        <shortName evidence="1">E4PDH</shortName>
        <ecNumber evidence="1">1.2.1.72</ecNumber>
    </recommendedName>
</protein>
<accession>Q7MHL0</accession>
<name>E4PD_VIBVY</name>
<evidence type="ECO:0000255" key="1">
    <source>
        <dbReference type="HAMAP-Rule" id="MF_01640"/>
    </source>
</evidence>